<protein>
    <recommendedName>
        <fullName evidence="1">Chaperone protein TorD</fullName>
    </recommendedName>
</protein>
<name>TORD_AERS4</name>
<evidence type="ECO:0000255" key="1">
    <source>
        <dbReference type="HAMAP-Rule" id="MF_01150"/>
    </source>
</evidence>
<comment type="function">
    <text evidence="1">Involved in the biogenesis of TorA. Acts on TorA before the insertion of the molybdenum cofactor and, as a result, probably favors a conformation of the apoenzyme that is competent for acquiring the cofactor.</text>
</comment>
<comment type="subcellular location">
    <subcellularLocation>
        <location evidence="1">Cytoplasm</location>
    </subcellularLocation>
</comment>
<comment type="similarity">
    <text evidence="1">Belongs to the TorD/DmsD family. TorD subfamily.</text>
</comment>
<proteinExistence type="inferred from homology"/>
<gene>
    <name evidence="1" type="primary">torD</name>
    <name type="ordered locus">ASA_0973</name>
</gene>
<accession>A4SJN2</accession>
<organism>
    <name type="scientific">Aeromonas salmonicida (strain A449)</name>
    <dbReference type="NCBI Taxonomy" id="382245"/>
    <lineage>
        <taxon>Bacteria</taxon>
        <taxon>Pseudomonadati</taxon>
        <taxon>Pseudomonadota</taxon>
        <taxon>Gammaproteobacteria</taxon>
        <taxon>Aeromonadales</taxon>
        <taxon>Aeromonadaceae</taxon>
        <taxon>Aeromonas</taxon>
    </lineage>
</organism>
<sequence length="214" mass="23868">MQEFLATSERRAELYWWFATLFSAELSDKQIAEYDSYDVRSFLKSLSTLDPMRPAVTELNEAIARLLVRDERATALAADFKGLFLADTAVQPYESAHLDASSLGRMQQRLVRLAIDVSAKYPQPVDHLGVELDLMGNLIIRAAEAPSADQREQWLGEQEAVLHGHLLAWFPHFEVACRAADPFGFYGASARLLGVFLTMDANYLSLVKPASSAD</sequence>
<reference key="1">
    <citation type="journal article" date="2008" name="BMC Genomics">
        <title>The genome of Aeromonas salmonicida subsp. salmonicida A449: insights into the evolution of a fish pathogen.</title>
        <authorList>
            <person name="Reith M.E."/>
            <person name="Singh R.K."/>
            <person name="Curtis B."/>
            <person name="Boyd J.M."/>
            <person name="Bouevitch A."/>
            <person name="Kimball J."/>
            <person name="Munholland J."/>
            <person name="Murphy C."/>
            <person name="Sarty D."/>
            <person name="Williams J."/>
            <person name="Nash J.H."/>
            <person name="Johnson S.C."/>
            <person name="Brown L.L."/>
        </authorList>
    </citation>
    <scope>NUCLEOTIDE SEQUENCE [LARGE SCALE GENOMIC DNA]</scope>
    <source>
        <strain>A449</strain>
    </source>
</reference>
<dbReference type="EMBL" id="CP000644">
    <property type="protein sequence ID" value="ABO89104.1"/>
    <property type="molecule type" value="Genomic_DNA"/>
</dbReference>
<dbReference type="RefSeq" id="WP_005317622.1">
    <property type="nucleotide sequence ID" value="NC_009348.1"/>
</dbReference>
<dbReference type="SMR" id="A4SJN2"/>
<dbReference type="STRING" id="29491.GCA_000820065_01212"/>
<dbReference type="KEGG" id="asa:ASA_0973"/>
<dbReference type="eggNOG" id="COG3381">
    <property type="taxonomic scope" value="Bacteria"/>
</dbReference>
<dbReference type="HOGENOM" id="CLU_077650_4_0_6"/>
<dbReference type="Proteomes" id="UP000000225">
    <property type="component" value="Chromosome"/>
</dbReference>
<dbReference type="GO" id="GO:0005737">
    <property type="term" value="C:cytoplasm"/>
    <property type="evidence" value="ECO:0007669"/>
    <property type="project" value="UniProtKB-SubCell"/>
</dbReference>
<dbReference type="GO" id="GO:0051259">
    <property type="term" value="P:protein complex oligomerization"/>
    <property type="evidence" value="ECO:0007669"/>
    <property type="project" value="InterPro"/>
</dbReference>
<dbReference type="GO" id="GO:0006457">
    <property type="term" value="P:protein folding"/>
    <property type="evidence" value="ECO:0007669"/>
    <property type="project" value="UniProtKB-UniRule"/>
</dbReference>
<dbReference type="Gene3D" id="1.20.120.1820">
    <property type="match status" value="1"/>
</dbReference>
<dbReference type="Gene3D" id="1.20.1280.20">
    <property type="entry name" value="HscB, C-terminal domain"/>
    <property type="match status" value="1"/>
</dbReference>
<dbReference type="HAMAP" id="MF_01150">
    <property type="entry name" value="TorD"/>
    <property type="match status" value="1"/>
</dbReference>
<dbReference type="InterPro" id="IPR023069">
    <property type="entry name" value="Chaperone_TorD"/>
</dbReference>
<dbReference type="InterPro" id="IPR020945">
    <property type="entry name" value="DMSO/NO3_reduct_chaperone"/>
</dbReference>
<dbReference type="InterPro" id="IPR036386">
    <property type="entry name" value="HscB_C_sf"/>
</dbReference>
<dbReference type="InterPro" id="IPR036411">
    <property type="entry name" value="TorD-like_sf"/>
</dbReference>
<dbReference type="InterPro" id="IPR050289">
    <property type="entry name" value="TorD/DmsD_chaperones"/>
</dbReference>
<dbReference type="NCBIfam" id="NF003442">
    <property type="entry name" value="PRK04976.1"/>
    <property type="match status" value="1"/>
</dbReference>
<dbReference type="PANTHER" id="PTHR34227:SF11">
    <property type="entry name" value="CHAPERONE PROTEIN TORD"/>
    <property type="match status" value="1"/>
</dbReference>
<dbReference type="PANTHER" id="PTHR34227">
    <property type="entry name" value="CHAPERONE PROTEIN YCDY"/>
    <property type="match status" value="1"/>
</dbReference>
<dbReference type="Pfam" id="PF02613">
    <property type="entry name" value="Nitrate_red_del"/>
    <property type="match status" value="1"/>
</dbReference>
<dbReference type="SUPFAM" id="SSF89155">
    <property type="entry name" value="TorD-like"/>
    <property type="match status" value="1"/>
</dbReference>
<keyword id="KW-0143">Chaperone</keyword>
<keyword id="KW-0963">Cytoplasm</keyword>
<feature type="chain" id="PRO_0000414891" description="Chaperone protein TorD">
    <location>
        <begin position="1"/>
        <end position="214"/>
    </location>
</feature>